<protein>
    <recommendedName>
        <fullName>Sec translocon accessory complex subunit YajC</fullName>
    </recommendedName>
</protein>
<accession>P0ADZ7</accession>
<accession>P19677</accession>
<accession>Q2MC19</accession>
<evidence type="ECO:0000255" key="1"/>
<evidence type="ECO:0000269" key="2">
    <source>
    </source>
</evidence>
<evidence type="ECO:0000269" key="3">
    <source>
    </source>
</evidence>
<evidence type="ECO:0000305" key="4"/>
<evidence type="ECO:0007829" key="5">
    <source>
        <dbReference type="PDB" id="2RDD"/>
    </source>
</evidence>
<keyword id="KW-0002">3D-structure</keyword>
<keyword id="KW-0997">Cell inner membrane</keyword>
<keyword id="KW-1003">Cell membrane</keyword>
<keyword id="KW-0472">Membrane</keyword>
<keyword id="KW-0653">Protein transport</keyword>
<keyword id="KW-1185">Reference proteome</keyword>
<keyword id="KW-0811">Translocation</keyword>
<keyword id="KW-0812">Transmembrane</keyword>
<keyword id="KW-1133">Transmembrane helix</keyword>
<keyword id="KW-0813">Transport</keyword>
<sequence length="110" mass="11887">MSFFISDAVAATGAPAQGSPMSLILMLVVFGLIFYFMILRPQQKRTKEHKKLMDSIAKGDEVLTNGGLVGRVTKVAENGYIAIALNDTTEVVIKRDFVAAVLPKGTMKAL</sequence>
<organism>
    <name type="scientific">Escherichia coli (strain K12)</name>
    <dbReference type="NCBI Taxonomy" id="83333"/>
    <lineage>
        <taxon>Bacteria</taxon>
        <taxon>Pseudomonadati</taxon>
        <taxon>Pseudomonadota</taxon>
        <taxon>Gammaproteobacteria</taxon>
        <taxon>Enterobacterales</taxon>
        <taxon>Enterobacteriaceae</taxon>
        <taxon>Escherichia</taxon>
    </lineage>
</organism>
<reference key="1">
    <citation type="journal article" date="1990" name="EMBO J.">
        <title>The secD locus of E.coli codes for two membrane proteins required for protein export.</title>
        <authorList>
            <person name="Gardel C."/>
            <person name="Johnson K."/>
            <person name="Jacq A."/>
            <person name="Beckwith J."/>
        </authorList>
    </citation>
    <scope>NUCLEOTIDE SEQUENCE [GENOMIC DNA]</scope>
    <source>
        <strain>K12</strain>
    </source>
</reference>
<reference key="2">
    <citation type="journal article" date="1990" name="EMBO J.">
        <authorList>
            <person name="Gardel C."/>
            <person name="Johnson K."/>
            <person name="Jacq A."/>
            <person name="Beckwith J."/>
        </authorList>
    </citation>
    <scope>ERRATUM OF PUBMED:2170107</scope>
</reference>
<reference key="3">
    <citation type="journal article" date="1991" name="J. Bacteriol.">
        <title>Structure and organization of Escherichia coli genes involved in biosynthesis of the deazaguanine derivative queuine, a nutrient factor for eukaryotes.</title>
        <authorList>
            <person name="Reuter K."/>
            <person name="Slany R."/>
            <person name="Ullrich F."/>
            <person name="Kersten H."/>
        </authorList>
    </citation>
    <scope>NUCLEOTIDE SEQUENCE [GENOMIC DNA]</scope>
    <source>
        <strain>K12</strain>
    </source>
</reference>
<reference key="4">
    <citation type="journal article" date="1994" name="J. Bacteriol.">
        <title>Genetic and molecular characterization of the Escherichia coli secD operon and its products.</title>
        <authorList>
            <person name="Pogliano K.J."/>
            <person name="Beckwith J."/>
        </authorList>
    </citation>
    <scope>NUCLEOTIDE SEQUENCE [GENOMIC DNA]</scope>
</reference>
<reference key="5">
    <citation type="submission" date="1997-01" db="EMBL/GenBank/DDBJ databases">
        <title>Sequence of minutes 4-25 of Escherichia coli.</title>
        <authorList>
            <person name="Chung E."/>
            <person name="Allen E."/>
            <person name="Araujo R."/>
            <person name="Aparicio A.M."/>
            <person name="Davis K."/>
            <person name="Duncan M."/>
            <person name="Federspiel N."/>
            <person name="Hyman R."/>
            <person name="Kalman S."/>
            <person name="Komp C."/>
            <person name="Kurdi O."/>
            <person name="Lew H."/>
            <person name="Lin D."/>
            <person name="Namath A."/>
            <person name="Oefner P."/>
            <person name="Roberts D."/>
            <person name="Schramm S."/>
            <person name="Davis R.W."/>
        </authorList>
    </citation>
    <scope>NUCLEOTIDE SEQUENCE [LARGE SCALE GENOMIC DNA]</scope>
    <source>
        <strain>K12 / MG1655 / ATCC 47076</strain>
    </source>
</reference>
<reference key="6">
    <citation type="journal article" date="1997" name="Science">
        <title>The complete genome sequence of Escherichia coli K-12.</title>
        <authorList>
            <person name="Blattner F.R."/>
            <person name="Plunkett G. III"/>
            <person name="Bloch C.A."/>
            <person name="Perna N.T."/>
            <person name="Burland V."/>
            <person name="Riley M."/>
            <person name="Collado-Vides J."/>
            <person name="Glasner J.D."/>
            <person name="Rode C.K."/>
            <person name="Mayhew G.F."/>
            <person name="Gregor J."/>
            <person name="Davis N.W."/>
            <person name="Kirkpatrick H.A."/>
            <person name="Goeden M.A."/>
            <person name="Rose D.J."/>
            <person name="Mau B."/>
            <person name="Shao Y."/>
        </authorList>
    </citation>
    <scope>NUCLEOTIDE SEQUENCE [LARGE SCALE GENOMIC DNA]</scope>
    <source>
        <strain>K12 / MG1655 / ATCC 47076</strain>
    </source>
</reference>
<reference key="7">
    <citation type="journal article" date="2006" name="Mol. Syst. Biol.">
        <title>Highly accurate genome sequences of Escherichia coli K-12 strains MG1655 and W3110.</title>
        <authorList>
            <person name="Hayashi K."/>
            <person name="Morooka N."/>
            <person name="Yamamoto Y."/>
            <person name="Fujita K."/>
            <person name="Isono K."/>
            <person name="Choi S."/>
            <person name="Ohtsubo E."/>
            <person name="Baba T."/>
            <person name="Wanner B.L."/>
            <person name="Mori H."/>
            <person name="Horiuchi T."/>
        </authorList>
    </citation>
    <scope>NUCLEOTIDE SEQUENCE [LARGE SCALE GENOMIC DNA]</scope>
    <source>
        <strain>K12 / W3110 / ATCC 27325 / DSM 5911</strain>
    </source>
</reference>
<reference key="8">
    <citation type="journal article" date="2005" name="J. Biol. Chem.">
        <title>Protein complexes of the Escherichia coli cell envelope.</title>
        <authorList>
            <person name="Stenberg F."/>
            <person name="Chovanec P."/>
            <person name="Maslen S.L."/>
            <person name="Robinson C.V."/>
            <person name="Ilag L."/>
            <person name="von Heijne G."/>
            <person name="Daley D.O."/>
        </authorList>
    </citation>
    <scope>SUBUNIT</scope>
    <scope>SUBCELLULAR LOCATION</scope>
    <source>
        <strain>BL21-DE3</strain>
    </source>
</reference>
<reference key="9">
    <citation type="journal article" date="2016" name="Biochem. J.">
        <title>Membrane protein insertion and assembly by the bacterial holo-translocon SecYEG-SecDF-YajC-YidC.</title>
        <authorList>
            <person name="Komar J."/>
            <person name="Alvira S."/>
            <person name="Schulze R.J."/>
            <person name="Martin R."/>
            <person name="Lycklama a Nijeholt J.A."/>
            <person name="Lee S.C."/>
            <person name="Dafforn T.R."/>
            <person name="Deckers-Hebestreit G."/>
            <person name="Berger I."/>
            <person name="Schaffitzel C."/>
            <person name="Collinson I."/>
        </authorList>
    </citation>
    <scope>FUNCTION</scope>
    <scope>SUBUNIT</scope>
    <scope>SUBCELLULAR LOCATION</scope>
    <source>
        <strain>BL21-DE3</strain>
    </source>
</reference>
<comment type="function">
    <text evidence="3">The SecYEG-SecDF-YajC-YidC holo-translocon (HTL) protein secretase/insertase is a supercomplex required for protein secretion, insertion of proteins into membranes, and assembly of membrane protein complexes (PubMed:27435098). The SecYEG complex is essential for assembly of a number of proteins and complexes, assembly is facilitated in the presence of the SecDF-YajC-YidC subcomplex (PubMed:27435098).</text>
</comment>
<comment type="subunit">
    <text evidence="2 3">Part of the SecDF-YidC-YajC translocase complex; YajC is also present in a homooligomeric complex in excess of the other components (PubMed:16079137). The SecDF-YidC-YajC translocase forms a supercomplex with SecYEG, called the holo-translocon (HTL) (PubMed:27435098). The stoichiometry of the super complex may be SecYEG:YidC:SecDF 4:3:1, YajC is in the reconstituted complex (with SecDF) but as no antibody is available it could not be quantified (PubMed:27435098).</text>
</comment>
<comment type="interaction">
    <interactant intactId="EBI-1130723">
        <id>P0ADZ7</id>
    </interactant>
    <interactant intactId="EBI-551006">
        <id>P31224</id>
        <label>acrB</label>
    </interactant>
    <organismsDiffer>false</organismsDiffer>
    <experiments>2</experiments>
</comment>
<comment type="subcellular location">
    <subcellularLocation>
        <location evidence="2 3">Cell inner membrane</location>
        <topology evidence="2">Single-pass membrane protein</topology>
    </subcellularLocation>
</comment>
<comment type="similarity">
    <text evidence="4">Belongs to the YajC family.</text>
</comment>
<name>YAJC_ECOLI</name>
<gene>
    <name type="primary">yajC</name>
    <name type="ordered locus">b0407</name>
    <name type="ordered locus">JW0397</name>
</gene>
<proteinExistence type="evidence at protein level"/>
<dbReference type="EMBL" id="X56175">
    <property type="protein sequence ID" value="CAA39633.1"/>
    <property type="molecule type" value="Genomic_DNA"/>
</dbReference>
<dbReference type="EMBL" id="M63939">
    <property type="protein sequence ID" value="AAA24668.1"/>
    <property type="molecule type" value="Genomic_DNA"/>
</dbReference>
<dbReference type="EMBL" id="S68715">
    <property type="protein sequence ID" value="AAC60468.1"/>
    <property type="molecule type" value="Genomic_DNA"/>
</dbReference>
<dbReference type="EMBL" id="U82664">
    <property type="protein sequence ID" value="AAB40163.1"/>
    <property type="molecule type" value="Genomic_DNA"/>
</dbReference>
<dbReference type="EMBL" id="U00096">
    <property type="protein sequence ID" value="AAC73510.1"/>
    <property type="molecule type" value="Genomic_DNA"/>
</dbReference>
<dbReference type="EMBL" id="AP009048">
    <property type="protein sequence ID" value="BAE76187.1"/>
    <property type="molecule type" value="Genomic_DNA"/>
</dbReference>
<dbReference type="PIR" id="D38530">
    <property type="entry name" value="D38530"/>
</dbReference>
<dbReference type="RefSeq" id="NP_414941.1">
    <property type="nucleotide sequence ID" value="NC_000913.3"/>
</dbReference>
<dbReference type="RefSeq" id="WP_000007629.1">
    <property type="nucleotide sequence ID" value="NZ_STEB01000007.1"/>
</dbReference>
<dbReference type="PDB" id="2RDD">
    <property type="method" value="X-ray"/>
    <property type="resolution" value="3.50 A"/>
    <property type="chains" value="B=19-55"/>
</dbReference>
<dbReference type="PDBsum" id="2RDD"/>
<dbReference type="SMR" id="P0ADZ7"/>
<dbReference type="BioGRID" id="4263532">
    <property type="interactions" value="416"/>
</dbReference>
<dbReference type="ComplexPortal" id="CPX-1095">
    <property type="entry name" value="Holo-translocon SecYEG-SecDF-YajC-YidC complex"/>
</dbReference>
<dbReference type="DIP" id="DIP-29531N"/>
<dbReference type="FunCoup" id="P0ADZ7">
    <property type="interactions" value="365"/>
</dbReference>
<dbReference type="IntAct" id="P0ADZ7">
    <property type="interactions" value="2"/>
</dbReference>
<dbReference type="STRING" id="511145.b0407"/>
<dbReference type="TCDB" id="3.A.5.1.1">
    <property type="family name" value="the general secretory pathway (sec) family"/>
</dbReference>
<dbReference type="jPOST" id="P0ADZ7"/>
<dbReference type="PaxDb" id="511145-b0407"/>
<dbReference type="EnsemblBacteria" id="AAC73510">
    <property type="protein sequence ID" value="AAC73510"/>
    <property type="gene ID" value="b0407"/>
</dbReference>
<dbReference type="GeneID" id="93777053"/>
<dbReference type="GeneID" id="945374"/>
<dbReference type="KEGG" id="ecj:JW0397"/>
<dbReference type="KEGG" id="eco:b0407"/>
<dbReference type="KEGG" id="ecoc:C3026_01980"/>
<dbReference type="PATRIC" id="fig|1411691.4.peg.1870"/>
<dbReference type="EchoBASE" id="EB1088"/>
<dbReference type="eggNOG" id="COG1862">
    <property type="taxonomic scope" value="Bacteria"/>
</dbReference>
<dbReference type="HOGENOM" id="CLU_116157_2_1_6"/>
<dbReference type="InParanoid" id="P0ADZ7"/>
<dbReference type="OMA" id="GMEMIIM"/>
<dbReference type="OrthoDB" id="9811406at2"/>
<dbReference type="PhylomeDB" id="P0ADZ7"/>
<dbReference type="BioCyc" id="EcoCyc:EG11096-MONOMER"/>
<dbReference type="BioCyc" id="MetaCyc:EG11096-MONOMER"/>
<dbReference type="EvolutionaryTrace" id="P0ADZ7"/>
<dbReference type="PRO" id="PR:P0ADZ7"/>
<dbReference type="Proteomes" id="UP000000625">
    <property type="component" value="Chromosome"/>
</dbReference>
<dbReference type="GO" id="GO:0031522">
    <property type="term" value="C:cell envelope Sec protein transport complex"/>
    <property type="evidence" value="ECO:0000353"/>
    <property type="project" value="ComplexPortal"/>
</dbReference>
<dbReference type="GO" id="GO:0016020">
    <property type="term" value="C:membrane"/>
    <property type="evidence" value="ECO:0000303"/>
    <property type="project" value="ComplexPortal"/>
</dbReference>
<dbReference type="GO" id="GO:0005886">
    <property type="term" value="C:plasma membrane"/>
    <property type="evidence" value="ECO:0000314"/>
    <property type="project" value="EcoCyc"/>
</dbReference>
<dbReference type="GO" id="GO:0032978">
    <property type="term" value="P:protein insertion into membrane from inner side"/>
    <property type="evidence" value="ECO:0000314"/>
    <property type="project" value="ComplexPortal"/>
</dbReference>
<dbReference type="GO" id="GO:0043952">
    <property type="term" value="P:protein transport by the Sec complex"/>
    <property type="evidence" value="ECO:0000314"/>
    <property type="project" value="ComplexPortal"/>
</dbReference>
<dbReference type="InterPro" id="IPR003849">
    <property type="entry name" value="Preprotein_translocase_YajC"/>
</dbReference>
<dbReference type="NCBIfam" id="TIGR00739">
    <property type="entry name" value="yajC"/>
    <property type="match status" value="1"/>
</dbReference>
<dbReference type="PANTHER" id="PTHR33909">
    <property type="entry name" value="SEC TRANSLOCON ACCESSORY COMPLEX SUBUNIT YAJC"/>
    <property type="match status" value="1"/>
</dbReference>
<dbReference type="PANTHER" id="PTHR33909:SF1">
    <property type="entry name" value="SEC TRANSLOCON ACCESSORY COMPLEX SUBUNIT YAJC"/>
    <property type="match status" value="1"/>
</dbReference>
<dbReference type="Pfam" id="PF02699">
    <property type="entry name" value="YajC"/>
    <property type="match status" value="1"/>
</dbReference>
<dbReference type="PRINTS" id="PR01853">
    <property type="entry name" value="YAJCTRNLCASE"/>
</dbReference>
<dbReference type="SMART" id="SM01323">
    <property type="entry name" value="YajC"/>
    <property type="match status" value="1"/>
</dbReference>
<feature type="chain" id="PRO_0000097013" description="Sec translocon accessory complex subunit YajC">
    <location>
        <begin position="1"/>
        <end position="110"/>
    </location>
</feature>
<feature type="transmembrane region" description="Helical" evidence="1">
    <location>
        <begin position="19"/>
        <end position="39"/>
    </location>
</feature>
<feature type="sequence conflict" description="In Ref. 1; CAA39633." evidence="4" ref="1">
    <original>A</original>
    <variation>R</variation>
    <location>
        <position position="82"/>
    </location>
</feature>
<feature type="helix" evidence="5">
    <location>
        <begin position="22"/>
        <end position="37"/>
    </location>
</feature>
<feature type="helix" evidence="5">
    <location>
        <begin position="39"/>
        <end position="49"/>
    </location>
</feature>
<feature type="helix" evidence="5">
    <location>
        <begin position="52"/>
        <end position="54"/>
    </location>
</feature>